<gene>
    <name type="primary">mxa</name>
</gene>
<accession>Q8JH68</accession>
<name>MXA_DANRE</name>
<protein>
    <recommendedName>
        <fullName>Interferon-induced GTP-binding protein MxA</fullName>
    </recommendedName>
    <alternativeName>
        <fullName>IFN-inducible antiviral protein MxA</fullName>
    </alternativeName>
    <alternativeName>
        <fullName>Interferon-inducible MxA protein</fullName>
    </alternativeName>
</protein>
<dbReference type="EMBL" id="AF533769">
    <property type="protein sequence ID" value="AAN01189.1"/>
    <property type="molecule type" value="mRNA"/>
</dbReference>
<dbReference type="EMBL" id="AJ544823">
    <property type="protein sequence ID" value="CAD67755.1"/>
    <property type="molecule type" value="mRNA"/>
</dbReference>
<dbReference type="SMR" id="Q8JH68"/>
<dbReference type="FunCoup" id="Q8JH68">
    <property type="interactions" value="38"/>
</dbReference>
<dbReference type="STRING" id="7955.ENSDARP00000094364"/>
<dbReference type="PaxDb" id="7955-ENSDARP00000106285"/>
<dbReference type="AGR" id="ZFIN:ZDB-GENE-030721-5"/>
<dbReference type="ZFIN" id="ZDB-GENE-030721-5">
    <property type="gene designation" value="mxa"/>
</dbReference>
<dbReference type="eggNOG" id="KOG0446">
    <property type="taxonomic scope" value="Eukaryota"/>
</dbReference>
<dbReference type="InParanoid" id="Q8JH68"/>
<dbReference type="PhylomeDB" id="Q8JH68"/>
<dbReference type="PRO" id="PR:Q8JH68"/>
<dbReference type="Proteomes" id="UP000000437">
    <property type="component" value="Unplaced"/>
</dbReference>
<dbReference type="GO" id="GO:0005737">
    <property type="term" value="C:cytoplasm"/>
    <property type="evidence" value="ECO:0000318"/>
    <property type="project" value="GO_Central"/>
</dbReference>
<dbReference type="GO" id="GO:0005874">
    <property type="term" value="C:microtubule"/>
    <property type="evidence" value="ECO:0000318"/>
    <property type="project" value="GO_Central"/>
</dbReference>
<dbReference type="GO" id="GO:0005634">
    <property type="term" value="C:nucleus"/>
    <property type="evidence" value="ECO:0000318"/>
    <property type="project" value="GO_Central"/>
</dbReference>
<dbReference type="GO" id="GO:0005886">
    <property type="term" value="C:plasma membrane"/>
    <property type="evidence" value="ECO:0000318"/>
    <property type="project" value="GO_Central"/>
</dbReference>
<dbReference type="GO" id="GO:0098793">
    <property type="term" value="C:presynapse"/>
    <property type="evidence" value="ECO:0007669"/>
    <property type="project" value="GOC"/>
</dbReference>
<dbReference type="GO" id="GO:0045202">
    <property type="term" value="C:synapse"/>
    <property type="evidence" value="ECO:0000318"/>
    <property type="project" value="GO_Central"/>
</dbReference>
<dbReference type="GO" id="GO:0005525">
    <property type="term" value="F:GTP binding"/>
    <property type="evidence" value="ECO:0007669"/>
    <property type="project" value="UniProtKB-KW"/>
</dbReference>
<dbReference type="GO" id="GO:0003924">
    <property type="term" value="F:GTPase activity"/>
    <property type="evidence" value="ECO:0000318"/>
    <property type="project" value="GO_Central"/>
</dbReference>
<dbReference type="GO" id="GO:0008017">
    <property type="term" value="F:microtubule binding"/>
    <property type="evidence" value="ECO:0000318"/>
    <property type="project" value="GO_Central"/>
</dbReference>
<dbReference type="GO" id="GO:0051607">
    <property type="term" value="P:defense response to virus"/>
    <property type="evidence" value="ECO:0000318"/>
    <property type="project" value="GO_Central"/>
</dbReference>
<dbReference type="GO" id="GO:0031623">
    <property type="term" value="P:receptor internalization"/>
    <property type="evidence" value="ECO:0000318"/>
    <property type="project" value="GO_Central"/>
</dbReference>
<dbReference type="GO" id="GO:0046685">
    <property type="term" value="P:response to arsenic-containing substance"/>
    <property type="evidence" value="ECO:0000314"/>
    <property type="project" value="ZFIN"/>
</dbReference>
<dbReference type="GO" id="GO:0009617">
    <property type="term" value="P:response to bacterium"/>
    <property type="evidence" value="ECO:0000314"/>
    <property type="project" value="ZFIN"/>
</dbReference>
<dbReference type="GO" id="GO:0009615">
    <property type="term" value="P:response to virus"/>
    <property type="evidence" value="ECO:0000314"/>
    <property type="project" value="ZFIN"/>
</dbReference>
<dbReference type="GO" id="GO:0016185">
    <property type="term" value="P:synaptic vesicle budding from presynaptic endocytic zone membrane"/>
    <property type="evidence" value="ECO:0000318"/>
    <property type="project" value="GO_Central"/>
</dbReference>
<dbReference type="CDD" id="cd08771">
    <property type="entry name" value="DLP_1"/>
    <property type="match status" value="1"/>
</dbReference>
<dbReference type="FunFam" id="1.20.120.1240:FF:000007">
    <property type="entry name" value="Interferon-induced GTP-binding protein Mx1"/>
    <property type="match status" value="1"/>
</dbReference>
<dbReference type="FunFam" id="3.40.50.300:FF:000621">
    <property type="entry name" value="Interferon-induced GTP-binding protein Mx1"/>
    <property type="match status" value="1"/>
</dbReference>
<dbReference type="Gene3D" id="1.20.120.1240">
    <property type="entry name" value="Dynamin, middle domain"/>
    <property type="match status" value="1"/>
</dbReference>
<dbReference type="Gene3D" id="3.40.50.300">
    <property type="entry name" value="P-loop containing nucleotide triphosphate hydrolases"/>
    <property type="match status" value="1"/>
</dbReference>
<dbReference type="InterPro" id="IPR022812">
    <property type="entry name" value="Dynamin"/>
</dbReference>
<dbReference type="InterPro" id="IPR001401">
    <property type="entry name" value="Dynamin_GTPase"/>
</dbReference>
<dbReference type="InterPro" id="IPR019762">
    <property type="entry name" value="Dynamin_GTPase_CS"/>
</dbReference>
<dbReference type="InterPro" id="IPR045063">
    <property type="entry name" value="Dynamin_N"/>
</dbReference>
<dbReference type="InterPro" id="IPR000375">
    <property type="entry name" value="Dynamin_stalk"/>
</dbReference>
<dbReference type="InterPro" id="IPR030381">
    <property type="entry name" value="G_DYNAMIN_dom"/>
</dbReference>
<dbReference type="InterPro" id="IPR003130">
    <property type="entry name" value="GED"/>
</dbReference>
<dbReference type="InterPro" id="IPR020850">
    <property type="entry name" value="GED_dom"/>
</dbReference>
<dbReference type="InterPro" id="IPR027417">
    <property type="entry name" value="P-loop_NTPase"/>
</dbReference>
<dbReference type="PANTHER" id="PTHR11566">
    <property type="entry name" value="DYNAMIN"/>
    <property type="match status" value="1"/>
</dbReference>
<dbReference type="PANTHER" id="PTHR11566:SF225">
    <property type="entry name" value="INTERFERON-INDUCED GTP-BINDING PROTEIN MX-RELATED"/>
    <property type="match status" value="1"/>
</dbReference>
<dbReference type="Pfam" id="PF01031">
    <property type="entry name" value="Dynamin_M"/>
    <property type="match status" value="1"/>
</dbReference>
<dbReference type="Pfam" id="PF00350">
    <property type="entry name" value="Dynamin_N"/>
    <property type="match status" value="1"/>
</dbReference>
<dbReference type="Pfam" id="PF02212">
    <property type="entry name" value="GED"/>
    <property type="match status" value="1"/>
</dbReference>
<dbReference type="PRINTS" id="PR00195">
    <property type="entry name" value="DYNAMIN"/>
</dbReference>
<dbReference type="SMART" id="SM00053">
    <property type="entry name" value="DYNc"/>
    <property type="match status" value="1"/>
</dbReference>
<dbReference type="SMART" id="SM00302">
    <property type="entry name" value="GED"/>
    <property type="match status" value="1"/>
</dbReference>
<dbReference type="SUPFAM" id="SSF52540">
    <property type="entry name" value="P-loop containing nucleoside triphosphate hydrolases"/>
    <property type="match status" value="1"/>
</dbReference>
<dbReference type="PROSITE" id="PS00410">
    <property type="entry name" value="G_DYNAMIN_1"/>
    <property type="match status" value="1"/>
</dbReference>
<dbReference type="PROSITE" id="PS51718">
    <property type="entry name" value="G_DYNAMIN_2"/>
    <property type="match status" value="1"/>
</dbReference>
<dbReference type="PROSITE" id="PS51388">
    <property type="entry name" value="GED"/>
    <property type="match status" value="1"/>
</dbReference>
<evidence type="ECO:0000250" key="1"/>
<evidence type="ECO:0000255" key="2"/>
<evidence type="ECO:0000255" key="3">
    <source>
        <dbReference type="PROSITE-ProRule" id="PRU00720"/>
    </source>
</evidence>
<evidence type="ECO:0000255" key="4">
    <source>
        <dbReference type="PROSITE-ProRule" id="PRU01055"/>
    </source>
</evidence>
<organism>
    <name type="scientific">Danio rerio</name>
    <name type="common">Zebrafish</name>
    <name type="synonym">Brachydanio rerio</name>
    <dbReference type="NCBI Taxonomy" id="7955"/>
    <lineage>
        <taxon>Eukaryota</taxon>
        <taxon>Metazoa</taxon>
        <taxon>Chordata</taxon>
        <taxon>Craniata</taxon>
        <taxon>Vertebrata</taxon>
        <taxon>Euteleostomi</taxon>
        <taxon>Actinopterygii</taxon>
        <taxon>Neopterygii</taxon>
        <taxon>Teleostei</taxon>
        <taxon>Ostariophysi</taxon>
        <taxon>Cypriniformes</taxon>
        <taxon>Danionidae</taxon>
        <taxon>Danioninae</taxon>
        <taxon>Danio</taxon>
    </lineage>
</organism>
<keyword id="KW-0963">Cytoplasm</keyword>
<keyword id="KW-0342">GTP-binding</keyword>
<keyword id="KW-0547">Nucleotide-binding</keyword>
<keyword id="KW-1185">Reference proteome</keyword>
<proteinExistence type="evidence at transcript level"/>
<feature type="chain" id="PRO_0000292867" description="Interferon-induced GTP-binding protein MxA">
    <location>
        <begin position="1"/>
        <end position="646"/>
    </location>
</feature>
<feature type="domain" description="Dynamin-type G" evidence="4">
    <location>
        <begin position="34"/>
        <end position="307"/>
    </location>
</feature>
<feature type="domain" description="GED" evidence="3">
    <location>
        <begin position="546"/>
        <end position="637"/>
    </location>
</feature>
<feature type="region of interest" description="G1 motif" evidence="4">
    <location>
        <begin position="44"/>
        <end position="51"/>
    </location>
</feature>
<feature type="region of interest" description="G2 motif" evidence="4">
    <location>
        <begin position="69"/>
        <end position="71"/>
    </location>
</feature>
<feature type="region of interest" description="G3 motif" evidence="4">
    <location>
        <begin position="145"/>
        <end position="148"/>
    </location>
</feature>
<feature type="region of interest" description="G4 motif" evidence="4">
    <location>
        <begin position="214"/>
        <end position="217"/>
    </location>
</feature>
<feature type="region of interest" description="G5 motif" evidence="4">
    <location>
        <begin position="246"/>
        <end position="249"/>
    </location>
</feature>
<feature type="binding site" evidence="2">
    <location>
        <begin position="44"/>
        <end position="51"/>
    </location>
    <ligand>
        <name>GTP</name>
        <dbReference type="ChEBI" id="CHEBI:37565"/>
    </ligand>
</feature>
<feature type="binding site" evidence="2">
    <location>
        <begin position="145"/>
        <end position="149"/>
    </location>
    <ligand>
        <name>GTP</name>
        <dbReference type="ChEBI" id="CHEBI:37565"/>
    </ligand>
</feature>
<feature type="binding site" evidence="2">
    <location>
        <begin position="214"/>
        <end position="217"/>
    </location>
    <ligand>
        <name>GTP</name>
        <dbReference type="ChEBI" id="CHEBI:37565"/>
    </ligand>
</feature>
<sequence length="646" mass="73262">MEKLSYTFSQQYEEKIRPCIDTIDNLRSLGVEKDLALPAIAVIGDQSSGKSSVLEALSGVPLPRGSGIVTRCPLELKMIRTKDQDRWHGRISYKTCEEDFDDPAEVEKKIRQAQDEMAGAGVGISEELISLQITSADVPDLTLIDLPGIARVAVKGQPENIGDQIKRLIRKFVTRQETINLVVVPCNVDIATTEALQMAQAEDPDGERTLGILTKPDLVDKGTEGTVVDIVHNEVIHLTKGYMIVRCRGQKEIMDQVTLNEATETESAFFKDHPHFSKLYEEGFATIPKLAEKLTIELVHHIQKSLPRLEEQIETKLAETQKELEAYGNGPPSEPAARLSFFIDKVTAFNQDMLNLTTGEDVKCTTDLLLFPELRQEFAKWSHILDRSGDSFNKKIEKEVDNYEVKYRGRELPGFINYKTFEGLVRDQIKLLEEPALKTLKTVSDVVRKKFIQLAQCSFIGFPNLLKIAKTKIEGIKLNKESLAESMLKTQFKMELIVYSQDGTYSQSLKHAKDKLEEMEKERPQPKIKLPLLSSFDLGTDNHATLREMRLHLKSYYTIASKRLADQIPMVIRYMLLQEAALELQRNMLQLLQDKDGVDNLLKEDCDIGQKRENLLSRQTRLIEGTQPLGHLLEVTFIDYCNILMQ</sequence>
<reference key="1">
    <citation type="journal article" date="2004" name="Dev. Comp. Immunol.">
        <title>Cloning and characterization of an Mx gene and its corresponding promoter from the zebrafish, Danio rerio.</title>
        <authorList>
            <person name="Altmann S.M."/>
            <person name="Mellon M.T."/>
            <person name="Johnson M.C."/>
            <person name="Paw B.H."/>
            <person name="Trede N.S."/>
            <person name="Zon L.I."/>
            <person name="Kim C.H."/>
        </authorList>
    </citation>
    <scope>NUCLEOTIDE SEQUENCE [MRNA]</scope>
</reference>
<reference key="2">
    <citation type="journal article" date="2003" name="BMC Genomics">
        <title>Comparative genomic analysis reveals independent expansion of a lineage-specific gene family in vertebrates: the class II cytokine receptors and their ligands in mammals and fish.</title>
        <authorList>
            <person name="Lutfalla G."/>
            <person name="Roest Crollius H."/>
            <person name="Stange-Thomann N."/>
            <person name="Jaillon O."/>
            <person name="Mogensen K."/>
            <person name="Monneron D."/>
        </authorList>
    </citation>
    <scope>NUCLEOTIDE SEQUENCE [MRNA]</scope>
</reference>
<comment type="subcellular location">
    <subcellularLocation>
        <location evidence="1">Cytoplasm</location>
    </subcellularLocation>
</comment>
<comment type="induction">
    <text>By interferons.</text>
</comment>
<comment type="similarity">
    <text evidence="4">Belongs to the TRAFAC class dynamin-like GTPase superfamily. Dynamin/Fzo/YdjA family.</text>
</comment>